<accession>Q5XD15</accession>
<evidence type="ECO:0000250" key="1">
    <source>
        <dbReference type="UniProtKB" id="Q8CWN2"/>
    </source>
</evidence>
<evidence type="ECO:0000255" key="2"/>
<evidence type="ECO:0000256" key="3">
    <source>
        <dbReference type="SAM" id="MobiDB-lite"/>
    </source>
</evidence>
<evidence type="ECO:0000305" key="4"/>
<keyword id="KW-0406">Ion transport</keyword>
<keyword id="KW-0479">Metal-binding</keyword>
<keyword id="KW-0732">Signal</keyword>
<keyword id="KW-0813">Transport</keyword>
<keyword id="KW-0862">Zinc</keyword>
<keyword id="KW-0864">Zinc transport</keyword>
<organism>
    <name type="scientific">Streptococcus pyogenes serotype M6 (strain ATCC BAA-946 / MGAS10394)</name>
    <dbReference type="NCBI Taxonomy" id="286636"/>
    <lineage>
        <taxon>Bacteria</taxon>
        <taxon>Bacillati</taxon>
        <taxon>Bacillota</taxon>
        <taxon>Bacilli</taxon>
        <taxon>Lactobacillales</taxon>
        <taxon>Streptococcaceae</taxon>
        <taxon>Streptococcus</taxon>
    </lineage>
</organism>
<proteinExistence type="inferred from homology"/>
<name>ADCA_STRP6</name>
<sequence>MKKKILLMMSLISVFFAWQLTQAKQVLAEGKVKVVTTFYPVYEFTKGVIGNDGDVSMLMKAGTEPHDFEPSTKDIKKIQDADAFVYMDDNMETWVSDVKKSLTSKKVTIVKGTGNMLLVAGAGHDHHHEDADKKHEHNKHSEEGHNHAFDPHVWLSPYRSITVVENIRDSLSKAYPEKAENFKANAATYIEKLKELDKDYTAALSDAKQKSFVTQHAAFGYMALDYGLNQISINGVTPDAEPSAKRIATLSKYVKKYGIKYIYFEENASSKVAKTLAKEAGVKAAVLSPLEGLTEKEMKAGQDYFTVMRKNLETLRLTTDVAGKEILPEKDTTKTVYNGYFKDKEVKDRQLSDWSGSWQSVYPYLQDGTLDQVWDYKAKKSKGKMTAAEYKDYYTTGYKTDVEQIKINGKKKTMTFVRNGEKKTFTYTYAGKEILTYPKGNRGVRFMFEAKEPNAGEFKYVQFSDHAIAPEKAEHFHLYWGGDSQEKLHKELEHWPTYYGSDLSGREIAQEINAH</sequence>
<gene>
    <name type="primary">adcA</name>
    <name type="ordered locus">M6_Spy0563</name>
</gene>
<reference key="1">
    <citation type="journal article" date="2004" name="J. Infect. Dis.">
        <title>Progress toward characterization of the group A Streptococcus metagenome: complete genome sequence of a macrolide-resistant serotype M6 strain.</title>
        <authorList>
            <person name="Banks D.J."/>
            <person name="Porcella S.F."/>
            <person name="Barbian K.D."/>
            <person name="Beres S.B."/>
            <person name="Philips L.E."/>
            <person name="Voyich J.M."/>
            <person name="DeLeo F.R."/>
            <person name="Martin J.M."/>
            <person name="Somerville G.A."/>
            <person name="Musser J.M."/>
        </authorList>
    </citation>
    <scope>NUCLEOTIDE SEQUENCE [LARGE SCALE GENOMIC DNA]</scope>
    <source>
        <strain>ATCC BAA-946 / MGAS10394</strain>
    </source>
</reference>
<feature type="signal peptide" evidence="2">
    <location>
        <begin position="1"/>
        <end position="28"/>
    </location>
</feature>
<feature type="chain" id="PRO_0000031870" description="Zinc-binding protein AdcA">
    <location>
        <begin position="29"/>
        <end position="515"/>
    </location>
</feature>
<feature type="region of interest" description="Disordered" evidence="3">
    <location>
        <begin position="125"/>
        <end position="148"/>
    </location>
</feature>
<feature type="region of interest" description="His-rich loop" evidence="1">
    <location>
        <begin position="129"/>
        <end position="148"/>
    </location>
</feature>
<feature type="binding site" evidence="1">
    <location>
        <position position="66"/>
    </location>
    <ligand>
        <name>Zn(2+)</name>
        <dbReference type="ChEBI" id="CHEBI:29105"/>
    </ligand>
</feature>
<feature type="binding site" evidence="1">
    <location>
        <position position="152"/>
    </location>
    <ligand>
        <name>Zn(2+)</name>
        <dbReference type="ChEBI" id="CHEBI:29105"/>
    </ligand>
</feature>
<feature type="binding site" evidence="1">
    <location>
        <position position="216"/>
    </location>
    <ligand>
        <name>Zn(2+)</name>
        <dbReference type="ChEBI" id="CHEBI:29105"/>
    </ligand>
</feature>
<feature type="binding site" evidence="1">
    <location>
        <position position="291"/>
    </location>
    <ligand>
        <name>Zn(2+)</name>
        <dbReference type="ChEBI" id="CHEBI:29105"/>
    </ligand>
</feature>
<protein>
    <recommendedName>
        <fullName>Zinc-binding protein AdcA</fullName>
    </recommendedName>
</protein>
<dbReference type="EMBL" id="CP000003">
    <property type="protein sequence ID" value="AAT86698.1"/>
    <property type="molecule type" value="Genomic_DNA"/>
</dbReference>
<dbReference type="RefSeq" id="WP_011184350.1">
    <property type="nucleotide sequence ID" value="NC_006086.1"/>
</dbReference>
<dbReference type="SMR" id="Q5XD15"/>
<dbReference type="KEGG" id="spa:M6_Spy0563"/>
<dbReference type="HOGENOM" id="CLU_016838_7_0_9"/>
<dbReference type="Proteomes" id="UP000001167">
    <property type="component" value="Chromosome"/>
</dbReference>
<dbReference type="GO" id="GO:0008270">
    <property type="term" value="F:zinc ion binding"/>
    <property type="evidence" value="ECO:0007669"/>
    <property type="project" value="InterPro"/>
</dbReference>
<dbReference type="GO" id="GO:0007155">
    <property type="term" value="P:cell adhesion"/>
    <property type="evidence" value="ECO:0007669"/>
    <property type="project" value="InterPro"/>
</dbReference>
<dbReference type="GO" id="GO:0006829">
    <property type="term" value="P:zinc ion transport"/>
    <property type="evidence" value="ECO:0007669"/>
    <property type="project" value="UniProtKB-KW"/>
</dbReference>
<dbReference type="CDD" id="cd01017">
    <property type="entry name" value="AdcA"/>
    <property type="match status" value="1"/>
</dbReference>
<dbReference type="Gene3D" id="2.40.128.20">
    <property type="match status" value="1"/>
</dbReference>
<dbReference type="Gene3D" id="3.40.50.1980">
    <property type="entry name" value="Nitrogenase molybdenum iron protein domain"/>
    <property type="match status" value="2"/>
</dbReference>
<dbReference type="InterPro" id="IPR006129">
    <property type="entry name" value="AdhesinB"/>
</dbReference>
<dbReference type="InterPro" id="IPR050492">
    <property type="entry name" value="Bact_metal-bind_prot9"/>
</dbReference>
<dbReference type="InterPro" id="IPR012674">
    <property type="entry name" value="Calycin"/>
</dbReference>
<dbReference type="InterPro" id="IPR006128">
    <property type="entry name" value="Lipoprotein_PsaA-like"/>
</dbReference>
<dbReference type="InterPro" id="IPR015304">
    <property type="entry name" value="ZinT_dom"/>
</dbReference>
<dbReference type="InterPro" id="IPR006127">
    <property type="entry name" value="ZnuA-like"/>
</dbReference>
<dbReference type="PANTHER" id="PTHR42953:SF3">
    <property type="entry name" value="HIGH-AFFINITY ZINC UPTAKE SYSTEM PROTEIN ZNUA"/>
    <property type="match status" value="1"/>
</dbReference>
<dbReference type="PANTHER" id="PTHR42953">
    <property type="entry name" value="HIGH-AFFINITY ZINC UPTAKE SYSTEM PROTEIN ZNUA-RELATED"/>
    <property type="match status" value="1"/>
</dbReference>
<dbReference type="Pfam" id="PF09223">
    <property type="entry name" value="ZinT"/>
    <property type="match status" value="1"/>
</dbReference>
<dbReference type="Pfam" id="PF01297">
    <property type="entry name" value="ZnuA"/>
    <property type="match status" value="1"/>
</dbReference>
<dbReference type="PRINTS" id="PR00691">
    <property type="entry name" value="ADHESINB"/>
</dbReference>
<dbReference type="PRINTS" id="PR00690">
    <property type="entry name" value="ADHESNFAMILY"/>
</dbReference>
<dbReference type="SUPFAM" id="SSF53807">
    <property type="entry name" value="Helical backbone' metal receptor"/>
    <property type="match status" value="1"/>
</dbReference>
<dbReference type="SUPFAM" id="SSF50814">
    <property type="entry name" value="Lipocalins"/>
    <property type="match status" value="1"/>
</dbReference>
<comment type="function">
    <text evidence="1">Part of the ATP-binding cassette (ABC) transport system AdcABC involved in zinc import (By similarity). Binds zinc with high affinity and specificity and delivers it to the membrane permease for translocation into the cytoplasm (By similarity).</text>
</comment>
<comment type="domain">
    <text evidence="1">The His-rich loop facilitates the closure of the zinc binding site and is required for zinc acquisition.</text>
</comment>
<comment type="similarity">
    <text evidence="4">Belongs to the bacterial solute-binding protein 9 family.</text>
</comment>